<evidence type="ECO:0000250" key="1">
    <source>
        <dbReference type="UniProtKB" id="P07851"/>
    </source>
</evidence>
<evidence type="ECO:0000255" key="2"/>
<evidence type="ECO:0000269" key="3">
    <source>
    </source>
</evidence>
<evidence type="ECO:0000303" key="4">
    <source>
    </source>
</evidence>
<evidence type="ECO:0000305" key="5"/>
<feature type="chain" id="PRO_0000174330" description="Chymotrypsin/elastase isoinhibitors 2 to 5" evidence="3">
    <location>
        <begin position="1"/>
        <end position="65"/>
    </location>
</feature>
<feature type="domain" description="TIL" evidence="2">
    <location>
        <begin position="4"/>
        <end position="59"/>
    </location>
</feature>
<feature type="site" description="Reactive bond">
    <location>
        <begin position="30"/>
        <end position="31"/>
    </location>
</feature>
<feature type="disulfide bond" evidence="1">
    <location>
        <begin position="4"/>
        <end position="37"/>
    </location>
</feature>
<feature type="disulfide bond" evidence="1">
    <location>
        <begin position="13"/>
        <end position="32"/>
    </location>
</feature>
<feature type="disulfide bond" evidence="1">
    <location>
        <begin position="16"/>
        <end position="28"/>
    </location>
</feature>
<feature type="disulfide bond" evidence="1">
    <location>
        <begin position="20"/>
        <end position="59"/>
    </location>
</feature>
<feature type="disulfide bond" evidence="1">
    <location>
        <begin position="39"/>
        <end position="53"/>
    </location>
</feature>
<feature type="sequence variant" description="In inhibitor 2 and inhibitor 4.">
    <original>K</original>
    <variation>N</variation>
    <location>
        <position position="25"/>
    </location>
</feature>
<feature type="sequence variant" description="In inhibitor 2 and inhibitor 4.">
    <original>T</original>
    <variation>S</variation>
    <location>
        <position position="40"/>
    </location>
</feature>
<feature type="sequence variant" description="In inhibitor 2.">
    <location>
        <begin position="64"/>
        <end position="65"/>
    </location>
</feature>
<feature type="sequence variant" description="In inhibitor 3.">
    <original>K</original>
    <variation>E</variation>
    <location>
        <position position="65"/>
    </location>
</feature>
<feature type="sequence variant">
    <original>K</original>
    <variation>R</variation>
    <location>
        <position position="65"/>
    </location>
</feature>
<keyword id="KW-0903">Direct protein sequencing</keyword>
<keyword id="KW-1015">Disulfide bond</keyword>
<keyword id="KW-0646">Protease inhibitor</keyword>
<keyword id="KW-0964">Secreted</keyword>
<keyword id="KW-0722">Serine protease inhibitor</keyword>
<dbReference type="SMR" id="P07852"/>
<dbReference type="GO" id="GO:0005576">
    <property type="term" value="C:extracellular region"/>
    <property type="evidence" value="ECO:0007669"/>
    <property type="project" value="UniProtKB-SubCell"/>
</dbReference>
<dbReference type="GO" id="GO:0004867">
    <property type="term" value="F:serine-type endopeptidase inhibitor activity"/>
    <property type="evidence" value="ECO:0007669"/>
    <property type="project" value="UniProtKB-KW"/>
</dbReference>
<dbReference type="Gene3D" id="2.10.25.10">
    <property type="entry name" value="Laminin"/>
    <property type="match status" value="1"/>
</dbReference>
<dbReference type="InterPro" id="IPR036084">
    <property type="entry name" value="Ser_inhib-like_sf"/>
</dbReference>
<dbReference type="InterPro" id="IPR002919">
    <property type="entry name" value="TIL_dom"/>
</dbReference>
<dbReference type="Pfam" id="PF01826">
    <property type="entry name" value="TIL"/>
    <property type="match status" value="1"/>
</dbReference>
<dbReference type="SUPFAM" id="SSF57567">
    <property type="entry name" value="Serine protease inhibitors"/>
    <property type="match status" value="1"/>
</dbReference>
<organism>
    <name type="scientific">Ascaris suum</name>
    <name type="common">Pig roundworm</name>
    <name type="synonym">Ascaris lumbricoides</name>
    <dbReference type="NCBI Taxonomy" id="6253"/>
    <lineage>
        <taxon>Eukaryota</taxon>
        <taxon>Metazoa</taxon>
        <taxon>Ecdysozoa</taxon>
        <taxon>Nematoda</taxon>
        <taxon>Chromadorea</taxon>
        <taxon>Rhabditida</taxon>
        <taxon>Spirurina</taxon>
        <taxon>Ascaridomorpha</taxon>
        <taxon>Ascaridoidea</taxon>
        <taxon>Ascarididae</taxon>
        <taxon>Ascaris</taxon>
    </lineage>
</organism>
<sequence>RKPCGKNEVWTECTGCELKCGQDEKTPCALMCRPPSCECTPGRGMRRTHDGKCVPVSECPRKMPK</sequence>
<proteinExistence type="evidence at protein level"/>
<protein>
    <recommendedName>
        <fullName evidence="4">Chymotrypsin/elastase isoinhibitors 2 to 5</fullName>
    </recommendedName>
</protein>
<comment type="function">
    <text evidence="5">Defends the organism against the host's proteinases.</text>
</comment>
<comment type="subcellular location">
    <subcellularLocation>
        <location evidence="3">Secreted</location>
    </subcellularLocation>
</comment>
<comment type="similarity">
    <text evidence="5">Belongs to the serine protease inhibitor-like (TIL domain-containing) family.</text>
</comment>
<accession>P07852</accession>
<reference key="1">
    <citation type="journal article" date="1984" name="Arch. Biochem. Biophys.">
        <title>The isoinhibitors of chymotrypsin/elastase from Ascaris lumbricoides: the primary structure.</title>
        <authorList>
            <person name="Babin D.R."/>
            <person name="Peanasky R.J."/>
            <person name="Goos S.M."/>
        </authorList>
    </citation>
    <scope>PROTEIN SEQUENCE</scope>
    <scope>SUBCELLULAR LOCATION</scope>
</reference>
<name>TIL2_ASCSU</name>